<proteinExistence type="inferred from homology"/>
<gene>
    <name evidence="1" type="primary">rplA</name>
    <name type="ordered locus">PPA1889</name>
</gene>
<accession>Q6A6K3</accession>
<comment type="function">
    <text evidence="1">Binds directly to 23S rRNA. The L1 stalk is quite mobile in the ribosome, and is involved in E site tRNA release.</text>
</comment>
<comment type="function">
    <text evidence="1">Protein L1 is also a translational repressor protein, it controls the translation of the L11 operon by binding to its mRNA.</text>
</comment>
<comment type="subunit">
    <text evidence="1">Part of the 50S ribosomal subunit.</text>
</comment>
<comment type="similarity">
    <text evidence="1">Belongs to the universal ribosomal protein uL1 family.</text>
</comment>
<reference key="1">
    <citation type="journal article" date="2004" name="Science">
        <title>The complete genome sequence of Propionibacterium acnes, a commensal of human skin.</title>
        <authorList>
            <person name="Brueggemann H."/>
            <person name="Henne A."/>
            <person name="Hoster F."/>
            <person name="Liesegang H."/>
            <person name="Wiezer A."/>
            <person name="Strittmatter A."/>
            <person name="Hujer S."/>
            <person name="Duerre P."/>
            <person name="Gottschalk G."/>
        </authorList>
    </citation>
    <scope>NUCLEOTIDE SEQUENCE [LARGE SCALE GENOMIC DNA]</scope>
    <source>
        <strain>DSM 16379 / KPA171202</strain>
    </source>
</reference>
<feature type="chain" id="PRO_0000125709" description="Large ribosomal subunit protein uL1">
    <location>
        <begin position="1"/>
        <end position="232"/>
    </location>
</feature>
<evidence type="ECO:0000255" key="1">
    <source>
        <dbReference type="HAMAP-Rule" id="MF_01318"/>
    </source>
</evidence>
<evidence type="ECO:0000305" key="2"/>
<organism>
    <name type="scientific">Cutibacterium acnes (strain DSM 16379 / KPA171202)</name>
    <name type="common">Propionibacterium acnes</name>
    <dbReference type="NCBI Taxonomy" id="267747"/>
    <lineage>
        <taxon>Bacteria</taxon>
        <taxon>Bacillati</taxon>
        <taxon>Actinomycetota</taxon>
        <taxon>Actinomycetes</taxon>
        <taxon>Propionibacteriales</taxon>
        <taxon>Propionibacteriaceae</taxon>
        <taxon>Cutibacterium</taxon>
    </lineage>
</organism>
<name>RL1_CUTAK</name>
<protein>
    <recommendedName>
        <fullName evidence="1">Large ribosomal subunit protein uL1</fullName>
    </recommendedName>
    <alternativeName>
        <fullName evidence="2">50S ribosomal protein L1</fullName>
    </alternativeName>
</protein>
<dbReference type="EMBL" id="AE017283">
    <property type="protein sequence ID" value="AAT83610.1"/>
    <property type="molecule type" value="Genomic_DNA"/>
</dbReference>
<dbReference type="RefSeq" id="WP_002531302.1">
    <property type="nucleotide sequence ID" value="NZ_CP025935.1"/>
</dbReference>
<dbReference type="SMR" id="Q6A6K3"/>
<dbReference type="EnsemblBacteria" id="AAT83610">
    <property type="protein sequence ID" value="AAT83610"/>
    <property type="gene ID" value="PPA1889"/>
</dbReference>
<dbReference type="KEGG" id="pac:PPA1889"/>
<dbReference type="PATRIC" id="fig|267747.3.peg.1942"/>
<dbReference type="eggNOG" id="COG0081">
    <property type="taxonomic scope" value="Bacteria"/>
</dbReference>
<dbReference type="HOGENOM" id="CLU_062853_0_0_11"/>
<dbReference type="Proteomes" id="UP000000603">
    <property type="component" value="Chromosome"/>
</dbReference>
<dbReference type="GO" id="GO:0015934">
    <property type="term" value="C:large ribosomal subunit"/>
    <property type="evidence" value="ECO:0007669"/>
    <property type="project" value="InterPro"/>
</dbReference>
<dbReference type="GO" id="GO:0019843">
    <property type="term" value="F:rRNA binding"/>
    <property type="evidence" value="ECO:0007669"/>
    <property type="project" value="UniProtKB-UniRule"/>
</dbReference>
<dbReference type="GO" id="GO:0003735">
    <property type="term" value="F:structural constituent of ribosome"/>
    <property type="evidence" value="ECO:0007669"/>
    <property type="project" value="InterPro"/>
</dbReference>
<dbReference type="GO" id="GO:0000049">
    <property type="term" value="F:tRNA binding"/>
    <property type="evidence" value="ECO:0007669"/>
    <property type="project" value="UniProtKB-KW"/>
</dbReference>
<dbReference type="GO" id="GO:0006417">
    <property type="term" value="P:regulation of translation"/>
    <property type="evidence" value="ECO:0007669"/>
    <property type="project" value="UniProtKB-KW"/>
</dbReference>
<dbReference type="GO" id="GO:0006412">
    <property type="term" value="P:translation"/>
    <property type="evidence" value="ECO:0007669"/>
    <property type="project" value="UniProtKB-UniRule"/>
</dbReference>
<dbReference type="CDD" id="cd00403">
    <property type="entry name" value="Ribosomal_L1"/>
    <property type="match status" value="1"/>
</dbReference>
<dbReference type="FunFam" id="3.40.50.790:FF:000001">
    <property type="entry name" value="50S ribosomal protein L1"/>
    <property type="match status" value="1"/>
</dbReference>
<dbReference type="Gene3D" id="3.30.190.20">
    <property type="match status" value="1"/>
</dbReference>
<dbReference type="Gene3D" id="3.40.50.790">
    <property type="match status" value="1"/>
</dbReference>
<dbReference type="HAMAP" id="MF_01318_B">
    <property type="entry name" value="Ribosomal_uL1_B"/>
    <property type="match status" value="1"/>
</dbReference>
<dbReference type="InterPro" id="IPR005878">
    <property type="entry name" value="Ribosom_uL1_bac-type"/>
</dbReference>
<dbReference type="InterPro" id="IPR002143">
    <property type="entry name" value="Ribosomal_uL1"/>
</dbReference>
<dbReference type="InterPro" id="IPR023674">
    <property type="entry name" value="Ribosomal_uL1-like"/>
</dbReference>
<dbReference type="InterPro" id="IPR028364">
    <property type="entry name" value="Ribosomal_uL1/biogenesis"/>
</dbReference>
<dbReference type="InterPro" id="IPR016095">
    <property type="entry name" value="Ribosomal_uL1_3-a/b-sand"/>
</dbReference>
<dbReference type="InterPro" id="IPR023673">
    <property type="entry name" value="Ribosomal_uL1_CS"/>
</dbReference>
<dbReference type="NCBIfam" id="TIGR01169">
    <property type="entry name" value="rplA_bact"/>
    <property type="match status" value="1"/>
</dbReference>
<dbReference type="PANTHER" id="PTHR36427">
    <property type="entry name" value="54S RIBOSOMAL PROTEIN L1, MITOCHONDRIAL"/>
    <property type="match status" value="1"/>
</dbReference>
<dbReference type="PANTHER" id="PTHR36427:SF3">
    <property type="entry name" value="LARGE RIBOSOMAL SUBUNIT PROTEIN UL1M"/>
    <property type="match status" value="1"/>
</dbReference>
<dbReference type="Pfam" id="PF00687">
    <property type="entry name" value="Ribosomal_L1"/>
    <property type="match status" value="1"/>
</dbReference>
<dbReference type="PIRSF" id="PIRSF002155">
    <property type="entry name" value="Ribosomal_L1"/>
    <property type="match status" value="1"/>
</dbReference>
<dbReference type="SUPFAM" id="SSF56808">
    <property type="entry name" value="Ribosomal protein L1"/>
    <property type="match status" value="1"/>
</dbReference>
<dbReference type="PROSITE" id="PS01199">
    <property type="entry name" value="RIBOSOMAL_L1"/>
    <property type="match status" value="1"/>
</dbReference>
<keyword id="KW-0678">Repressor</keyword>
<keyword id="KW-0687">Ribonucleoprotein</keyword>
<keyword id="KW-0689">Ribosomal protein</keyword>
<keyword id="KW-0694">RNA-binding</keyword>
<keyword id="KW-0699">rRNA-binding</keyword>
<keyword id="KW-0810">Translation regulation</keyword>
<keyword id="KW-0820">tRNA-binding</keyword>
<sequence length="232" mass="24768">MKRSKAYRAAAEKVNLDQLYSPEEALALVASGASAKFDETVDVAIRLGVDPKKADQMVRGTVNLPHGTGKTTRVLVFATGEKAEAAREAGADEVGDDDLIAKVQGGYLDFDSVVATPDMMGKVGRLGRVLGPRGLMPNPKTGTVTMDVAKAVSDIKGGKIEFRTDRYANLHFLIGKVSFGSEKLAENYFAALDEILRLKPNAAKGRYLRKITVSSTMGPGVQIDPVAARDAD</sequence>